<proteinExistence type="inferred from homology"/>
<accession>B5F1P5</accession>
<reference key="1">
    <citation type="journal article" date="2011" name="J. Bacteriol.">
        <title>Comparative genomics of 28 Salmonella enterica isolates: evidence for CRISPR-mediated adaptive sublineage evolution.</title>
        <authorList>
            <person name="Fricke W.F."/>
            <person name="Mammel M.K."/>
            <person name="McDermott P.F."/>
            <person name="Tartera C."/>
            <person name="White D.G."/>
            <person name="Leclerc J.E."/>
            <person name="Ravel J."/>
            <person name="Cebula T.A."/>
        </authorList>
    </citation>
    <scope>NUCLEOTIDE SEQUENCE [LARGE SCALE GENOMIC DNA]</scope>
    <source>
        <strain>SL483</strain>
    </source>
</reference>
<protein>
    <recommendedName>
        <fullName evidence="1">Protein PsiE</fullName>
    </recommendedName>
</protein>
<name>PSIE_SALA4</name>
<feature type="chain" id="PRO_1000136217" description="Protein PsiE">
    <location>
        <begin position="1"/>
        <end position="136"/>
    </location>
</feature>
<feature type="transmembrane region" description="Helical" evidence="1">
    <location>
        <begin position="15"/>
        <end position="35"/>
    </location>
</feature>
<feature type="transmembrane region" description="Helical" evidence="1">
    <location>
        <begin position="55"/>
        <end position="75"/>
    </location>
</feature>
<feature type="transmembrane region" description="Helical" evidence="1">
    <location>
        <begin position="83"/>
        <end position="103"/>
    </location>
</feature>
<feature type="transmembrane region" description="Helical" evidence="1">
    <location>
        <begin position="108"/>
        <end position="128"/>
    </location>
</feature>
<keyword id="KW-0997">Cell inner membrane</keyword>
<keyword id="KW-1003">Cell membrane</keyword>
<keyword id="KW-0472">Membrane</keyword>
<keyword id="KW-0812">Transmembrane</keyword>
<keyword id="KW-1133">Transmembrane helix</keyword>
<evidence type="ECO:0000255" key="1">
    <source>
        <dbReference type="HAMAP-Rule" id="MF_01048"/>
    </source>
</evidence>
<comment type="subcellular location">
    <subcellularLocation>
        <location evidence="1">Cell inner membrane</location>
        <topology evidence="1">Multi-pass membrane protein</topology>
    </subcellularLocation>
</comment>
<comment type="similarity">
    <text evidence="1">Belongs to the PsiE family.</text>
</comment>
<sequence>MMPLSRSRLEFIATILQNVLNLGLLTLGLILVVFLGKETVHLADALFVPEQASKYELVEGLVIYFLYFEFIALIVKYFKSGLHFPLRYFVYIGITAIVRLIIVDHKTPMDVLLYSAAILLLVITLWLCNSNRLRRE</sequence>
<dbReference type="EMBL" id="CP001138">
    <property type="protein sequence ID" value="ACH48543.1"/>
    <property type="molecule type" value="Genomic_DNA"/>
</dbReference>
<dbReference type="RefSeq" id="WP_000982752.1">
    <property type="nucleotide sequence ID" value="NC_011149.1"/>
</dbReference>
<dbReference type="SMR" id="B5F1P5"/>
<dbReference type="KEGG" id="sea:SeAg_B4483"/>
<dbReference type="HOGENOM" id="CLU_127561_0_1_6"/>
<dbReference type="Proteomes" id="UP000008819">
    <property type="component" value="Chromosome"/>
</dbReference>
<dbReference type="GO" id="GO:0005886">
    <property type="term" value="C:plasma membrane"/>
    <property type="evidence" value="ECO:0007669"/>
    <property type="project" value="UniProtKB-SubCell"/>
</dbReference>
<dbReference type="GO" id="GO:0016036">
    <property type="term" value="P:cellular response to phosphate starvation"/>
    <property type="evidence" value="ECO:0007669"/>
    <property type="project" value="InterPro"/>
</dbReference>
<dbReference type="HAMAP" id="MF_01048">
    <property type="entry name" value="PsiE"/>
    <property type="match status" value="1"/>
</dbReference>
<dbReference type="InterPro" id="IPR009315">
    <property type="entry name" value="P_starv_induced_PsiE"/>
</dbReference>
<dbReference type="InterPro" id="IPR020948">
    <property type="entry name" value="P_starv_induced_PsiE-like"/>
</dbReference>
<dbReference type="NCBIfam" id="NF002764">
    <property type="entry name" value="PRK02833.1-2"/>
    <property type="match status" value="1"/>
</dbReference>
<dbReference type="NCBIfam" id="NF002765">
    <property type="entry name" value="PRK02833.1-3"/>
    <property type="match status" value="1"/>
</dbReference>
<dbReference type="NCBIfam" id="NF002767">
    <property type="entry name" value="PRK02833.1-5"/>
    <property type="match status" value="1"/>
</dbReference>
<dbReference type="PANTHER" id="PTHR37819">
    <property type="entry name" value="PROTEIN PSIE"/>
    <property type="match status" value="1"/>
</dbReference>
<dbReference type="PANTHER" id="PTHR37819:SF1">
    <property type="entry name" value="PROTEIN PSIE"/>
    <property type="match status" value="1"/>
</dbReference>
<dbReference type="Pfam" id="PF06146">
    <property type="entry name" value="PsiE"/>
    <property type="match status" value="1"/>
</dbReference>
<dbReference type="PIRSF" id="PIRSF029598">
    <property type="entry name" value="PsiE"/>
    <property type="match status" value="1"/>
</dbReference>
<organism>
    <name type="scientific">Salmonella agona (strain SL483)</name>
    <dbReference type="NCBI Taxonomy" id="454166"/>
    <lineage>
        <taxon>Bacteria</taxon>
        <taxon>Pseudomonadati</taxon>
        <taxon>Pseudomonadota</taxon>
        <taxon>Gammaproteobacteria</taxon>
        <taxon>Enterobacterales</taxon>
        <taxon>Enterobacteriaceae</taxon>
        <taxon>Salmonella</taxon>
    </lineage>
</organism>
<gene>
    <name evidence="1" type="primary">psiE</name>
    <name type="ordered locus">SeAg_B4483</name>
</gene>